<accession>P18537</accession>
<accession>Q9VUE0</accession>
<accession>Q9VUE2</accession>
<sequence>MWRQILFILPTLIQGVQRYDQSPLDASPYYRSGGGLMASSGTELDGLPHHNRCEPITISICKNIPYNMTIMPNLIGHTKQEEAGLEVHQFAPLVKIGCSDDLQLFLCSLYVPVCTILERPIPPCRSLCESARVCEKLMKTYNFNWPENLECSKFPVHGGEDLCVAENTTSSASTAATPTRSVAKVTTRKHQTGVESPHRNIGFVCPVQLKTPLGMGYELKVGGKDLHDCGAPCHAMFFPERERTVLRYWVGSWAAVCVASCLFTVLTFLIDSSRFRYPERAIVFLAVCYLVVGCAYVAGLGAGDSVSCREPFPPPVKLGRLQMMSTITQGHRQTTSCTVLFMALYFCCMAAFAWWSCLAFAWFLAAGLKWGHEAIENKSHLFHLVAWAVPALQTISVLALAKVEGDILSGVCFVGQLDTHSLGAFLILPLCIYLSIGALFLLAGFISLFRIRTVMKTDGKRTDKLERLMLRIGFFSGLFILPAVGLLGCLFYEYYNFDEWMIQWHRDICKPFSIPCPAARAPGSPEARPIFQIFMVKYLCSMLVGVTSSVWLYSSKTMVSWRNFVERLQGKEPRTRAQAYV</sequence>
<feature type="signal peptide" evidence="2">
    <location>
        <begin position="1"/>
        <end position="18"/>
    </location>
</feature>
<feature type="chain" id="PRO_0000013010" description="Frizzled">
    <location>
        <begin position="19"/>
        <end position="581"/>
    </location>
</feature>
<feature type="topological domain" description="Extracellular" evidence="7">
    <location>
        <begin position="19"/>
        <end position="247"/>
    </location>
</feature>
<feature type="transmembrane region" description="Helical; Name=1" evidence="6">
    <location>
        <begin position="248"/>
        <end position="270"/>
    </location>
</feature>
<feature type="topological domain" description="Cytoplasmic" evidence="7">
    <location>
        <begin position="271"/>
        <end position="280"/>
    </location>
</feature>
<feature type="transmembrane region" description="Helical; Name=2" evidence="6">
    <location>
        <begin position="281"/>
        <end position="303"/>
    </location>
</feature>
<feature type="topological domain" description="Extracellular" evidence="7">
    <location>
        <begin position="304"/>
        <end position="343"/>
    </location>
</feature>
<feature type="transmembrane region" description="Helical; Name=3" evidence="6">
    <location>
        <begin position="344"/>
        <end position="364"/>
    </location>
</feature>
<feature type="topological domain" description="Cytoplasmic" evidence="7">
    <location>
        <begin position="365"/>
        <end position="380"/>
    </location>
</feature>
<feature type="transmembrane region" description="Helical; Name=4" evidence="6">
    <location>
        <begin position="381"/>
        <end position="401"/>
    </location>
</feature>
<feature type="topological domain" description="Extracellular" evidence="7">
    <location>
        <begin position="402"/>
        <end position="421"/>
    </location>
</feature>
<feature type="transmembrane region" description="Helical; Name=5" evidence="6">
    <location>
        <begin position="422"/>
        <end position="439"/>
    </location>
</feature>
<feature type="topological domain" description="Cytoplasmic" evidence="7">
    <location>
        <begin position="440"/>
        <end position="471"/>
    </location>
</feature>
<feature type="transmembrane region" description="Helical; Name=6" evidence="6">
    <location>
        <begin position="472"/>
        <end position="492"/>
    </location>
</feature>
<feature type="topological domain" description="Extracellular" evidence="7">
    <location>
        <begin position="493"/>
        <end position="529"/>
    </location>
</feature>
<feature type="transmembrane region" description="Helical; Name=7" evidence="6">
    <location>
        <begin position="530"/>
        <end position="553"/>
    </location>
</feature>
<feature type="topological domain" description="Cytoplasmic" evidence="7">
    <location>
        <begin position="554"/>
        <end position="581"/>
    </location>
</feature>
<feature type="domain" description="FZ" evidence="3">
    <location>
        <begin position="48"/>
        <end position="166"/>
    </location>
</feature>
<feature type="short sequence motif" description="Lys-Thr-X-X-X-Trp motif, mediates interaction with the PDZ domain of Dvl family members" evidence="1">
    <location>
        <begin position="556"/>
        <end position="561"/>
    </location>
</feature>
<feature type="short sequence motif" description="PDZ-binding">
    <location>
        <begin position="579"/>
        <end position="581"/>
    </location>
</feature>
<feature type="glycosylation site" description="N-linked (GlcNAc...) asparagine" evidence="2">
    <location>
        <position position="67"/>
    </location>
</feature>
<feature type="glycosylation site" description="N-linked (GlcNAc...) asparagine" evidence="2">
    <location>
        <position position="167"/>
    </location>
</feature>
<feature type="disulfide bond" evidence="3">
    <location>
        <begin position="53"/>
        <end position="114"/>
    </location>
</feature>
<feature type="disulfide bond" evidence="3">
    <location>
        <begin position="61"/>
        <end position="107"/>
    </location>
</feature>
<feature type="disulfide bond" evidence="3">
    <location>
        <begin position="98"/>
        <end position="134"/>
    </location>
</feature>
<feature type="disulfide bond" evidence="3">
    <location>
        <begin position="124"/>
        <end position="163"/>
    </location>
</feature>
<feature type="disulfide bond" evidence="3">
    <location>
        <begin position="128"/>
        <end position="151"/>
    </location>
</feature>
<gene>
    <name type="primary">fz</name>
    <name type="ORF">CG17697</name>
</gene>
<reference key="1">
    <citation type="journal article" date="1989" name="Nature">
        <title>A Drosophila tissue polarity locus encodes a protein containing seven potential transmembrane domains.</title>
        <authorList>
            <person name="Vinson C.R."/>
            <person name="Conover S."/>
            <person name="Adler P.N."/>
        </authorList>
    </citation>
    <scope>NUCLEOTIDE SEQUENCE [MRNA]</scope>
</reference>
<reference key="2">
    <citation type="journal article" date="1990" name="Genetics">
        <title>Molecular structure of frizzled, a Drosophila tissue polarity gene.</title>
        <authorList>
            <person name="Adler P.N."/>
            <person name="Vinson C."/>
            <person name="Park W.J."/>
            <person name="Conover S."/>
            <person name="Klein L."/>
        </authorList>
    </citation>
    <scope>NUCLEOTIDE SEQUENCE [GENOMIC DNA / MRNA]</scope>
    <source>
        <strain>Canton-S</strain>
        <tissue>Embryo</tissue>
    </source>
</reference>
<reference key="3">
    <citation type="journal article" date="2000" name="Science">
        <title>The genome sequence of Drosophila melanogaster.</title>
        <authorList>
            <person name="Adams M.D."/>
            <person name="Celniker S.E."/>
            <person name="Holt R.A."/>
            <person name="Evans C.A."/>
            <person name="Gocayne J.D."/>
            <person name="Amanatides P.G."/>
            <person name="Scherer S.E."/>
            <person name="Li P.W."/>
            <person name="Hoskins R.A."/>
            <person name="Galle R.F."/>
            <person name="George R.A."/>
            <person name="Lewis S.E."/>
            <person name="Richards S."/>
            <person name="Ashburner M."/>
            <person name="Henderson S.N."/>
            <person name="Sutton G.G."/>
            <person name="Wortman J.R."/>
            <person name="Yandell M.D."/>
            <person name="Zhang Q."/>
            <person name="Chen L.X."/>
            <person name="Brandon R.C."/>
            <person name="Rogers Y.-H.C."/>
            <person name="Blazej R.G."/>
            <person name="Champe M."/>
            <person name="Pfeiffer B.D."/>
            <person name="Wan K.H."/>
            <person name="Doyle C."/>
            <person name="Baxter E.G."/>
            <person name="Helt G."/>
            <person name="Nelson C.R."/>
            <person name="Miklos G.L.G."/>
            <person name="Abril J.F."/>
            <person name="Agbayani A."/>
            <person name="An H.-J."/>
            <person name="Andrews-Pfannkoch C."/>
            <person name="Baldwin D."/>
            <person name="Ballew R.M."/>
            <person name="Basu A."/>
            <person name="Baxendale J."/>
            <person name="Bayraktaroglu L."/>
            <person name="Beasley E.M."/>
            <person name="Beeson K.Y."/>
            <person name="Benos P.V."/>
            <person name="Berman B.P."/>
            <person name="Bhandari D."/>
            <person name="Bolshakov S."/>
            <person name="Borkova D."/>
            <person name="Botchan M.R."/>
            <person name="Bouck J."/>
            <person name="Brokstein P."/>
            <person name="Brottier P."/>
            <person name="Burtis K.C."/>
            <person name="Busam D.A."/>
            <person name="Butler H."/>
            <person name="Cadieu E."/>
            <person name="Center A."/>
            <person name="Chandra I."/>
            <person name="Cherry J.M."/>
            <person name="Cawley S."/>
            <person name="Dahlke C."/>
            <person name="Davenport L.B."/>
            <person name="Davies P."/>
            <person name="de Pablos B."/>
            <person name="Delcher A."/>
            <person name="Deng Z."/>
            <person name="Mays A.D."/>
            <person name="Dew I."/>
            <person name="Dietz S.M."/>
            <person name="Dodson K."/>
            <person name="Doup L.E."/>
            <person name="Downes M."/>
            <person name="Dugan-Rocha S."/>
            <person name="Dunkov B.C."/>
            <person name="Dunn P."/>
            <person name="Durbin K.J."/>
            <person name="Evangelista C.C."/>
            <person name="Ferraz C."/>
            <person name="Ferriera S."/>
            <person name="Fleischmann W."/>
            <person name="Fosler C."/>
            <person name="Gabrielian A.E."/>
            <person name="Garg N.S."/>
            <person name="Gelbart W.M."/>
            <person name="Glasser K."/>
            <person name="Glodek A."/>
            <person name="Gong F."/>
            <person name="Gorrell J.H."/>
            <person name="Gu Z."/>
            <person name="Guan P."/>
            <person name="Harris M."/>
            <person name="Harris N.L."/>
            <person name="Harvey D.A."/>
            <person name="Heiman T.J."/>
            <person name="Hernandez J.R."/>
            <person name="Houck J."/>
            <person name="Hostin D."/>
            <person name="Houston K.A."/>
            <person name="Howland T.J."/>
            <person name="Wei M.-H."/>
            <person name="Ibegwam C."/>
            <person name="Jalali M."/>
            <person name="Kalush F."/>
            <person name="Karpen G.H."/>
            <person name="Ke Z."/>
            <person name="Kennison J.A."/>
            <person name="Ketchum K.A."/>
            <person name="Kimmel B.E."/>
            <person name="Kodira C.D."/>
            <person name="Kraft C.L."/>
            <person name="Kravitz S."/>
            <person name="Kulp D."/>
            <person name="Lai Z."/>
            <person name="Lasko P."/>
            <person name="Lei Y."/>
            <person name="Levitsky A.A."/>
            <person name="Li J.H."/>
            <person name="Li Z."/>
            <person name="Liang Y."/>
            <person name="Lin X."/>
            <person name="Liu X."/>
            <person name="Mattei B."/>
            <person name="McIntosh T.C."/>
            <person name="McLeod M.P."/>
            <person name="McPherson D."/>
            <person name="Merkulov G."/>
            <person name="Milshina N.V."/>
            <person name="Mobarry C."/>
            <person name="Morris J."/>
            <person name="Moshrefi A."/>
            <person name="Mount S.M."/>
            <person name="Moy M."/>
            <person name="Murphy B."/>
            <person name="Murphy L."/>
            <person name="Muzny D.M."/>
            <person name="Nelson D.L."/>
            <person name="Nelson D.R."/>
            <person name="Nelson K.A."/>
            <person name="Nixon K."/>
            <person name="Nusskern D.R."/>
            <person name="Pacleb J.M."/>
            <person name="Palazzolo M."/>
            <person name="Pittman G.S."/>
            <person name="Pan S."/>
            <person name="Pollard J."/>
            <person name="Puri V."/>
            <person name="Reese M.G."/>
            <person name="Reinert K."/>
            <person name="Remington K."/>
            <person name="Saunders R.D.C."/>
            <person name="Scheeler F."/>
            <person name="Shen H."/>
            <person name="Shue B.C."/>
            <person name="Siden-Kiamos I."/>
            <person name="Simpson M."/>
            <person name="Skupski M.P."/>
            <person name="Smith T.J."/>
            <person name="Spier E."/>
            <person name="Spradling A.C."/>
            <person name="Stapleton M."/>
            <person name="Strong R."/>
            <person name="Sun E."/>
            <person name="Svirskas R."/>
            <person name="Tector C."/>
            <person name="Turner R."/>
            <person name="Venter E."/>
            <person name="Wang A.H."/>
            <person name="Wang X."/>
            <person name="Wang Z.-Y."/>
            <person name="Wassarman D.A."/>
            <person name="Weinstock G.M."/>
            <person name="Weissenbach J."/>
            <person name="Williams S.M."/>
            <person name="Woodage T."/>
            <person name="Worley K.C."/>
            <person name="Wu D."/>
            <person name="Yang S."/>
            <person name="Yao Q.A."/>
            <person name="Ye J."/>
            <person name="Yeh R.-F."/>
            <person name="Zaveri J.S."/>
            <person name="Zhan M."/>
            <person name="Zhang G."/>
            <person name="Zhao Q."/>
            <person name="Zheng L."/>
            <person name="Zheng X.H."/>
            <person name="Zhong F.N."/>
            <person name="Zhong W."/>
            <person name="Zhou X."/>
            <person name="Zhu S.C."/>
            <person name="Zhu X."/>
            <person name="Smith H.O."/>
            <person name="Gibbs R.A."/>
            <person name="Myers E.W."/>
            <person name="Rubin G.M."/>
            <person name="Venter J.C."/>
        </authorList>
    </citation>
    <scope>NUCLEOTIDE SEQUENCE [LARGE SCALE GENOMIC DNA]</scope>
    <source>
        <strain>Berkeley</strain>
    </source>
</reference>
<reference key="4">
    <citation type="journal article" date="2002" name="Genome Biol.">
        <title>Annotation of the Drosophila melanogaster euchromatic genome: a systematic review.</title>
        <authorList>
            <person name="Misra S."/>
            <person name="Crosby M.A."/>
            <person name="Mungall C.J."/>
            <person name="Matthews B.B."/>
            <person name="Campbell K.S."/>
            <person name="Hradecky P."/>
            <person name="Huang Y."/>
            <person name="Kaminker J.S."/>
            <person name="Millburn G.H."/>
            <person name="Prochnik S.E."/>
            <person name="Smith C.D."/>
            <person name="Tupy J.L."/>
            <person name="Whitfield E.J."/>
            <person name="Bayraktaroglu L."/>
            <person name="Berman B.P."/>
            <person name="Bettencourt B.R."/>
            <person name="Celniker S.E."/>
            <person name="de Grey A.D.N.J."/>
            <person name="Drysdale R.A."/>
            <person name="Harris N.L."/>
            <person name="Richter J."/>
            <person name="Russo S."/>
            <person name="Schroeder A.J."/>
            <person name="Shu S.Q."/>
            <person name="Stapleton M."/>
            <person name="Yamada C."/>
            <person name="Ashburner M."/>
            <person name="Gelbart W.M."/>
            <person name="Rubin G.M."/>
            <person name="Lewis S.E."/>
        </authorList>
    </citation>
    <scope>GENOME REANNOTATION</scope>
    <source>
        <strain>Berkeley</strain>
    </source>
</reference>
<reference key="5">
    <citation type="journal article" date="2002" name="Genome Biol.">
        <title>A Drosophila full-length cDNA resource.</title>
        <authorList>
            <person name="Stapleton M."/>
            <person name="Carlson J.W."/>
            <person name="Brokstein P."/>
            <person name="Yu C."/>
            <person name="Champe M."/>
            <person name="George R.A."/>
            <person name="Guarin H."/>
            <person name="Kronmiller B."/>
            <person name="Pacleb J.M."/>
            <person name="Park S."/>
            <person name="Wan K.H."/>
            <person name="Rubin G.M."/>
            <person name="Celniker S.E."/>
        </authorList>
    </citation>
    <scope>NUCLEOTIDE SEQUENCE [LARGE SCALE MRNA]</scope>
    <source>
        <strain>Berkeley</strain>
        <tissue>Embryo</tissue>
    </source>
</reference>
<reference key="6">
    <citation type="journal article" date="1999" name="DNA Cell Biol.">
        <title>Frizzled-suc2 fusion gene studies in Saccharomyces cerevisiae.</title>
        <authorList>
            <person name="Goo J.H."/>
            <person name="Ahn Y."/>
            <person name="Park W.J."/>
        </authorList>
    </citation>
    <scope>TOPOLOGY</scope>
</reference>
<reference key="7">
    <citation type="journal article" date="2010" name="Curr. Biol.">
        <title>Wnt/Frizzled signaling requires dPRR, the Drosophila homolog of the prorenin receptor.</title>
        <authorList>
            <person name="Buechling T."/>
            <person name="Bartscherer K."/>
            <person name="Ohkawara B."/>
            <person name="Chaudhary V."/>
            <person name="Spirohn K."/>
            <person name="Niehrs C."/>
            <person name="Boutros M."/>
        </authorList>
    </citation>
    <scope>INTERACTION WITH ATP6AP2</scope>
</reference>
<reference key="8">
    <citation type="journal article" date="2024" name="Proc. Natl. Acad. Sci. U.S.A.">
        <title>Loss of the endoplasmic reticulum protein Tmem208 affects cell polarity, development, and viability.</title>
        <authorList>
            <consortium name="Undiagnosed Diseases Network"/>
            <person name="Dutta D."/>
            <person name="Kanca O."/>
            <person name="Shridharan R.V."/>
            <person name="Marcogliese P.C."/>
            <person name="Steger B."/>
            <person name="Morimoto M."/>
            <person name="Frost F.G."/>
            <person name="Macnamara E."/>
            <person name="Wangler M.F."/>
            <person name="Yamamoto S."/>
            <person name="Jenny A."/>
            <person name="Adams D."/>
            <person name="Malicdan M.C."/>
            <person name="Bellen H.J."/>
        </authorList>
    </citation>
    <scope>INTERACTION WITH TMEM208</scope>
</reference>
<protein>
    <recommendedName>
        <fullName>Frizzled</fullName>
    </recommendedName>
    <alternativeName>
        <fullName>Frizzled-1</fullName>
        <shortName>dFz1</shortName>
    </alternativeName>
</protein>
<comment type="function">
    <text>Receptor for Wnt proteins. Most of frizzled receptors are coupled to the beta-catenin canonical signaling pathway, which leads to the activation of disheveled proteins, inhibition of GSK-3 kinase, nuclear accumulation of beta-catenin and activation of Wnt target genes. A second signaling pathway involving PKC and calcium fluxes has been seen for some family members, but it is not yet clear if it represents a distinct pathway or if it can be integrated in the canonical pathway, as PKC seems to be required for Wnt-mediated inactivation of GSK-3 kinase. Both pathways seem to involve interactions with G-proteins. Required to coordinate the cytoskeletons of epidermal cells to produce a parallel array of cuticular hairs and bristles.</text>
</comment>
<comment type="subunit">
    <text evidence="4 5">Interacts with ATP6AP2 (PubMed:20579883). Interacts with tmem208 (PubMed:38381787).</text>
</comment>
<comment type="interaction">
    <interactant intactId="EBI-251576">
        <id>P18537</id>
    </interactant>
    <interactant intactId="EBI-119250">
        <id>Q9V5N8</id>
        <label>stan</label>
    </interactant>
    <organismsDiffer>false</organismsDiffer>
    <experiments>3</experiments>
</comment>
<comment type="subcellular location">
    <subcellularLocation>
        <location>Cell membrane</location>
        <topology>Multi-pass membrane protein</topology>
    </subcellularLocation>
</comment>
<comment type="domain">
    <text evidence="1">Lys-Thr-X-X-X-Trp motif interacts with the PDZ domain of Dvl (Disheveled) family members and is involved in the activation of the Wnt/beta-catenin signaling pathway.</text>
</comment>
<comment type="domain">
    <text evidence="1">The FZ domain is involved in binding with Wnt ligands.</text>
</comment>
<comment type="similarity">
    <text evidence="6">Belongs to the G-protein coupled receptor Fz/Smo family.</text>
</comment>
<comment type="sequence caution" evidence="6">
    <conflict type="miscellaneous discrepancy">
        <sequence resource="EMBL-CDS" id="CAA38459"/>
    </conflict>
    <text>Intron retention.</text>
</comment>
<comment type="sequence caution" evidence="6">
    <conflict type="miscellaneous discrepancy">
        <sequence resource="EMBL-CDS" id="CAA38461"/>
    </conflict>
    <text>Intron retention.</text>
</comment>
<dbReference type="EMBL" id="X54648">
    <property type="protein sequence ID" value="CAA38460.1"/>
    <property type="molecule type" value="Genomic_DNA"/>
</dbReference>
<dbReference type="EMBL" id="X54649">
    <property type="protein sequence ID" value="CAA38460.1"/>
    <property type="status" value="JOINED"/>
    <property type="molecule type" value="Genomic_DNA"/>
</dbReference>
<dbReference type="EMBL" id="X54650">
    <property type="protein sequence ID" value="CAA38460.1"/>
    <property type="status" value="JOINED"/>
    <property type="molecule type" value="Genomic_DNA"/>
</dbReference>
<dbReference type="EMBL" id="X54651">
    <property type="protein sequence ID" value="CAA38460.1"/>
    <property type="status" value="JOINED"/>
    <property type="molecule type" value="Genomic_DNA"/>
</dbReference>
<dbReference type="EMBL" id="X54648">
    <property type="protein sequence ID" value="CAA38461.1"/>
    <property type="status" value="ALT_SEQ"/>
    <property type="molecule type" value="Genomic_DNA"/>
</dbReference>
<dbReference type="EMBL" id="X54649">
    <property type="protein sequence ID" value="CAA38461.1"/>
    <property type="status" value="JOINED"/>
    <property type="molecule type" value="Genomic_DNA"/>
</dbReference>
<dbReference type="EMBL" id="X54650">
    <property type="protein sequence ID" value="CAA38461.1"/>
    <property type="status" value="JOINED"/>
    <property type="molecule type" value="Genomic_DNA"/>
</dbReference>
<dbReference type="EMBL" id="X54652">
    <property type="protein sequence ID" value="CAA38461.1"/>
    <property type="status" value="JOINED"/>
    <property type="molecule type" value="Genomic_DNA"/>
</dbReference>
<dbReference type="EMBL" id="X54646">
    <property type="protein sequence ID" value="CAA38458.1"/>
    <property type="molecule type" value="mRNA"/>
</dbReference>
<dbReference type="EMBL" id="X54647">
    <property type="protein sequence ID" value="CAA38459.1"/>
    <property type="status" value="ALT_SEQ"/>
    <property type="molecule type" value="mRNA"/>
</dbReference>
<dbReference type="EMBL" id="AE014296">
    <property type="protein sequence ID" value="AAF49746.3"/>
    <property type="molecule type" value="Genomic_DNA"/>
</dbReference>
<dbReference type="EMBL" id="AY051808">
    <property type="protein sequence ID" value="AAK93232.1"/>
    <property type="molecule type" value="mRNA"/>
</dbReference>
<dbReference type="PIR" id="S03540">
    <property type="entry name" value="S03540"/>
</dbReference>
<dbReference type="RefSeq" id="NP_524812.1">
    <property type="nucleotide sequence ID" value="NM_080073.3"/>
</dbReference>
<dbReference type="SMR" id="P18537"/>
<dbReference type="BioGRID" id="69580">
    <property type="interactions" value="59"/>
</dbReference>
<dbReference type="DIP" id="DIP-22727N"/>
<dbReference type="FunCoup" id="P18537">
    <property type="interactions" value="514"/>
</dbReference>
<dbReference type="IntAct" id="P18537">
    <property type="interactions" value="8"/>
</dbReference>
<dbReference type="STRING" id="7227.FBpp0303135"/>
<dbReference type="TCDB" id="9.A.14.16.5">
    <property type="family name" value="the g-protein-coupled receptor (gpcr) family"/>
</dbReference>
<dbReference type="GlyCosmos" id="P18537">
    <property type="glycosylation" value="2 sites, No reported glycans"/>
</dbReference>
<dbReference type="GlyGen" id="P18537">
    <property type="glycosylation" value="2 sites"/>
</dbReference>
<dbReference type="PaxDb" id="7227-FBpp0075485"/>
<dbReference type="DNASU" id="45307"/>
<dbReference type="EnsemblMetazoa" id="FBtr0075743">
    <property type="protein sequence ID" value="FBpp0075485"/>
    <property type="gene ID" value="FBgn0001085"/>
</dbReference>
<dbReference type="GeneID" id="45307"/>
<dbReference type="KEGG" id="dme:Dmel_CG17697"/>
<dbReference type="AGR" id="FB:FBgn0001085"/>
<dbReference type="CTD" id="45307"/>
<dbReference type="FlyBase" id="FBgn0001085">
    <property type="gene designation" value="fz"/>
</dbReference>
<dbReference type="VEuPathDB" id="VectorBase:FBgn0001085"/>
<dbReference type="eggNOG" id="KOG3577">
    <property type="taxonomic scope" value="Eukaryota"/>
</dbReference>
<dbReference type="GeneTree" id="ENSGT00940000166686"/>
<dbReference type="HOGENOM" id="CLU_007873_2_1_1"/>
<dbReference type="InParanoid" id="P18537"/>
<dbReference type="OMA" id="VPDHGYC"/>
<dbReference type="OrthoDB" id="10053709at2759"/>
<dbReference type="PhylomeDB" id="P18537"/>
<dbReference type="Reactome" id="R-DME-209387">
    <property type="pathway name" value="Phosphorylation of ARR"/>
</dbReference>
<dbReference type="Reactome" id="R-DME-209440">
    <property type="pathway name" value="Recruitment of the 'destruction complex' to the receptor complex, the degradation of AXN and release of ARM"/>
</dbReference>
<dbReference type="Reactome" id="R-DME-209472">
    <property type="pathway name" value="Assembly of receptor complex"/>
</dbReference>
<dbReference type="Reactome" id="R-DME-350368">
    <property type="pathway name" value="Activation of RHO1 by FZ:DSH complex"/>
</dbReference>
<dbReference type="Reactome" id="R-DME-350376">
    <property type="pathway name" value="Activation of RAC1:GTP by FZ:DSH complex"/>
</dbReference>
<dbReference type="Reactome" id="R-DME-350379">
    <property type="pathway name" value="Homo-/heterophilic binding of transmembrane components"/>
</dbReference>
<dbReference type="Reactome" id="R-DME-350411">
    <property type="pathway name" value="Formation and asymmetric localisation of transmembrane complexes"/>
</dbReference>
<dbReference type="Reactome" id="R-DME-350480">
    <property type="pathway name" value="Activation of non-muscle Myosin II"/>
</dbReference>
<dbReference type="Reactome" id="R-DME-4086398">
    <property type="pathway name" value="Ca2+ pathway"/>
</dbReference>
<dbReference type="Reactome" id="R-DME-4086400">
    <property type="pathway name" value="PCP/CE pathway"/>
</dbReference>
<dbReference type="Reactome" id="R-DME-450728">
    <property type="pathway name" value="Inhibition of actin polymerization"/>
</dbReference>
<dbReference type="Reactome" id="R-DME-4608870">
    <property type="pathway name" value="Asymmetric localization of PCP proteins"/>
</dbReference>
<dbReference type="Reactome" id="R-DME-4641262">
    <property type="pathway name" value="Disassembly of the destruction complex and recruitment of AXIN to the membrane"/>
</dbReference>
<dbReference type="Reactome" id="R-DME-5140745">
    <property type="pathway name" value="WNT5A-dependent internalization of FZD2, FZD5 and ROR2"/>
</dbReference>
<dbReference type="SignaLink" id="P18537"/>
<dbReference type="BioGRID-ORCS" id="45307">
    <property type="hits" value="0 hits in 3 CRISPR screens"/>
</dbReference>
<dbReference type="GenomeRNAi" id="45307"/>
<dbReference type="PRO" id="PR:P18537"/>
<dbReference type="Proteomes" id="UP000000803">
    <property type="component" value="Chromosome 3L"/>
</dbReference>
<dbReference type="Bgee" id="FBgn0001085">
    <property type="expression patterns" value="Expressed in polar follicle cell (Drosophila) in ovary and 232 other cell types or tissues"/>
</dbReference>
<dbReference type="ExpressionAtlas" id="P18537">
    <property type="expression patterns" value="baseline and differential"/>
</dbReference>
<dbReference type="GO" id="GO:0016020">
    <property type="term" value="C:membrane"/>
    <property type="evidence" value="ECO:0000304"/>
    <property type="project" value="UniProtKB"/>
</dbReference>
<dbReference type="GO" id="GO:0005886">
    <property type="term" value="C:plasma membrane"/>
    <property type="evidence" value="ECO:0000314"/>
    <property type="project" value="FlyBase"/>
</dbReference>
<dbReference type="GO" id="GO:0004930">
    <property type="term" value="F:G protein-coupled receptor activity"/>
    <property type="evidence" value="ECO:0007669"/>
    <property type="project" value="UniProtKB-KW"/>
</dbReference>
<dbReference type="GO" id="GO:0042813">
    <property type="term" value="F:Wnt receptor activity"/>
    <property type="evidence" value="ECO:0000314"/>
    <property type="project" value="FlyBase"/>
</dbReference>
<dbReference type="GO" id="GO:0017147">
    <property type="term" value="F:Wnt-protein binding"/>
    <property type="evidence" value="ECO:0000353"/>
    <property type="project" value="FlyBase"/>
</dbReference>
<dbReference type="GO" id="GO:0008356">
    <property type="term" value="P:asymmetric cell division"/>
    <property type="evidence" value="ECO:0000315"/>
    <property type="project" value="FlyBase"/>
</dbReference>
<dbReference type="GO" id="GO:0048675">
    <property type="term" value="P:axon extension"/>
    <property type="evidence" value="ECO:0000315"/>
    <property type="project" value="FlyBase"/>
</dbReference>
<dbReference type="GO" id="GO:0007298">
    <property type="term" value="P:border follicle cell migration"/>
    <property type="evidence" value="ECO:0000315"/>
    <property type="project" value="FlyBase"/>
</dbReference>
<dbReference type="GO" id="GO:0060070">
    <property type="term" value="P:canonical Wnt signaling pathway"/>
    <property type="evidence" value="ECO:0000316"/>
    <property type="project" value="FlyBase"/>
</dbReference>
<dbReference type="GO" id="GO:0042685">
    <property type="term" value="P:cardioblast cell fate specification"/>
    <property type="evidence" value="ECO:0000316"/>
    <property type="project" value="FlyBase"/>
</dbReference>
<dbReference type="GO" id="GO:0035293">
    <property type="term" value="P:chitin-based larval cuticle pattern formation"/>
    <property type="evidence" value="ECO:0000316"/>
    <property type="project" value="FlyBase"/>
</dbReference>
<dbReference type="GO" id="GO:0001745">
    <property type="term" value="P:compound eye morphogenesis"/>
    <property type="evidence" value="ECO:0000315"/>
    <property type="project" value="FlyBase"/>
</dbReference>
<dbReference type="GO" id="GO:0030010">
    <property type="term" value="P:establishment of cell polarity"/>
    <property type="evidence" value="ECO:0000315"/>
    <property type="project" value="FlyBase"/>
</dbReference>
<dbReference type="GO" id="GO:0001737">
    <property type="term" value="P:establishment of imaginal disc-derived wing hair orientation"/>
    <property type="evidence" value="ECO:0000315"/>
    <property type="project" value="FlyBase"/>
</dbReference>
<dbReference type="GO" id="GO:0042067">
    <property type="term" value="P:establishment of ommatidial planar polarity"/>
    <property type="evidence" value="ECO:0000315"/>
    <property type="project" value="FlyBase"/>
</dbReference>
<dbReference type="GO" id="GO:0001736">
    <property type="term" value="P:establishment of planar polarity"/>
    <property type="evidence" value="ECO:0000315"/>
    <property type="project" value="FlyBase"/>
</dbReference>
<dbReference type="GO" id="GO:0007163">
    <property type="term" value="P:establishment or maintenance of cell polarity"/>
    <property type="evidence" value="ECO:0000315"/>
    <property type="project" value="UniProtKB"/>
</dbReference>
<dbReference type="GO" id="GO:0007186">
    <property type="term" value="P:G protein-coupled receptor signaling pathway"/>
    <property type="evidence" value="ECO:0000316"/>
    <property type="project" value="FlyBase"/>
</dbReference>
<dbReference type="GO" id="GO:0060250">
    <property type="term" value="P:germ-line stem-cell niche homeostasis"/>
    <property type="evidence" value="ECO:0000315"/>
    <property type="project" value="FlyBase"/>
</dbReference>
<dbReference type="GO" id="GO:0007156">
    <property type="term" value="P:homophilic cell adhesion via plasma membrane adhesion molecules"/>
    <property type="evidence" value="ECO:0000315"/>
    <property type="project" value="FlyBase"/>
</dbReference>
<dbReference type="GO" id="GO:0035317">
    <property type="term" value="P:imaginal disc-derived wing hair organization"/>
    <property type="evidence" value="ECO:0000316"/>
    <property type="project" value="FlyBase"/>
</dbReference>
<dbReference type="GO" id="GO:0035320">
    <property type="term" value="P:imaginal disc-derived wing hair site selection"/>
    <property type="evidence" value="ECO:0000315"/>
    <property type="project" value="FlyBase"/>
</dbReference>
<dbReference type="GO" id="GO:0008587">
    <property type="term" value="P:imaginal disc-derived wing margin morphogenesis"/>
    <property type="evidence" value="ECO:0000316"/>
    <property type="project" value="FlyBase"/>
</dbReference>
<dbReference type="GO" id="GO:0007494">
    <property type="term" value="P:midgut development"/>
    <property type="evidence" value="ECO:0000316"/>
    <property type="project" value="FlyBase"/>
</dbReference>
<dbReference type="GO" id="GO:0001738">
    <property type="term" value="P:morphogenesis of a polarized epithelium"/>
    <property type="evidence" value="ECO:0000315"/>
    <property type="project" value="FlyBase"/>
</dbReference>
<dbReference type="GO" id="GO:0048665">
    <property type="term" value="P:neuron fate specification"/>
    <property type="evidence" value="ECO:0000316"/>
    <property type="project" value="FlyBase"/>
</dbReference>
<dbReference type="GO" id="GO:0035567">
    <property type="term" value="P:non-canonical Wnt signaling pathway"/>
    <property type="evidence" value="ECO:0000318"/>
    <property type="project" value="GO_Central"/>
</dbReference>
<dbReference type="GO" id="GO:0016318">
    <property type="term" value="P:ommatidial rotation"/>
    <property type="evidence" value="ECO:0000315"/>
    <property type="project" value="FlyBase"/>
</dbReference>
<dbReference type="GO" id="GO:0045773">
    <property type="term" value="P:positive regulation of axon extension"/>
    <property type="evidence" value="ECO:0000316"/>
    <property type="project" value="FlyBase"/>
</dbReference>
<dbReference type="GO" id="GO:1902669">
    <property type="term" value="P:positive regulation of axon guidance"/>
    <property type="evidence" value="ECO:0000315"/>
    <property type="project" value="FlyBase"/>
</dbReference>
<dbReference type="GO" id="GO:0048056">
    <property type="term" value="P:R3/R4 cell differentiation"/>
    <property type="evidence" value="ECO:0000315"/>
    <property type="project" value="FlyBase"/>
</dbReference>
<dbReference type="GO" id="GO:0007464">
    <property type="term" value="P:R3/R4 cell fate commitment"/>
    <property type="evidence" value="ECO:0000315"/>
    <property type="project" value="FlyBase"/>
</dbReference>
<dbReference type="GO" id="GO:0035206">
    <property type="term" value="P:regulation of hemocyte proliferation"/>
    <property type="evidence" value="ECO:0000315"/>
    <property type="project" value="FlyBase"/>
</dbReference>
<dbReference type="GO" id="GO:0035159">
    <property type="term" value="P:regulation of tube length, open tracheal system"/>
    <property type="evidence" value="ECO:0000315"/>
    <property type="project" value="FlyBase"/>
</dbReference>
<dbReference type="GO" id="GO:0007435">
    <property type="term" value="P:salivary gland morphogenesis"/>
    <property type="evidence" value="ECO:0000315"/>
    <property type="project" value="FlyBase"/>
</dbReference>
<dbReference type="GO" id="GO:0007367">
    <property type="term" value="P:segment polarity determination"/>
    <property type="evidence" value="ECO:0000316"/>
    <property type="project" value="FlyBase"/>
</dbReference>
<dbReference type="GO" id="GO:0016360">
    <property type="term" value="P:sensory organ precursor cell fate determination"/>
    <property type="evidence" value="ECO:0000315"/>
    <property type="project" value="FlyBase"/>
</dbReference>
<dbReference type="CDD" id="cd15248">
    <property type="entry name" value="7tmF_FZD1_insect"/>
    <property type="match status" value="1"/>
</dbReference>
<dbReference type="CDD" id="cd07458">
    <property type="entry name" value="CRD_FZ1_like"/>
    <property type="match status" value="1"/>
</dbReference>
<dbReference type="FunFam" id="1.10.2000.10:FF:000016">
    <property type="entry name" value="Frizzled"/>
    <property type="match status" value="1"/>
</dbReference>
<dbReference type="FunFam" id="1.20.1070.10:FF:000350">
    <property type="entry name" value="Frizzled"/>
    <property type="match status" value="1"/>
</dbReference>
<dbReference type="Gene3D" id="1.10.2000.10">
    <property type="entry name" value="Frizzled cysteine-rich domain"/>
    <property type="match status" value="1"/>
</dbReference>
<dbReference type="Gene3D" id="1.20.1070.10">
    <property type="entry name" value="Rhodopsin 7-helix transmembrane proteins"/>
    <property type="match status" value="1"/>
</dbReference>
<dbReference type="InterPro" id="IPR015526">
    <property type="entry name" value="Frizzled/SFRP"/>
</dbReference>
<dbReference type="InterPro" id="IPR000539">
    <property type="entry name" value="Frizzled/Smoothened_7TM"/>
</dbReference>
<dbReference type="InterPro" id="IPR020067">
    <property type="entry name" value="Frizzled_dom"/>
</dbReference>
<dbReference type="InterPro" id="IPR036790">
    <property type="entry name" value="Frizzled_dom_sf"/>
</dbReference>
<dbReference type="InterPro" id="IPR017981">
    <property type="entry name" value="GPCR_2-like_7TM"/>
</dbReference>
<dbReference type="PANTHER" id="PTHR11309">
    <property type="entry name" value="FRIZZLED"/>
    <property type="match status" value="1"/>
</dbReference>
<dbReference type="PANTHER" id="PTHR11309:SF47">
    <property type="entry name" value="FRIZZLED"/>
    <property type="match status" value="1"/>
</dbReference>
<dbReference type="Pfam" id="PF01534">
    <property type="entry name" value="Frizzled"/>
    <property type="match status" value="1"/>
</dbReference>
<dbReference type="Pfam" id="PF01392">
    <property type="entry name" value="Fz"/>
    <property type="match status" value="1"/>
</dbReference>
<dbReference type="PRINTS" id="PR00489">
    <property type="entry name" value="FRIZZLED"/>
</dbReference>
<dbReference type="SMART" id="SM00063">
    <property type="entry name" value="FRI"/>
    <property type="match status" value="1"/>
</dbReference>
<dbReference type="SMART" id="SM01330">
    <property type="entry name" value="Frizzled"/>
    <property type="match status" value="1"/>
</dbReference>
<dbReference type="SUPFAM" id="SSF63501">
    <property type="entry name" value="Frizzled cysteine-rich domain"/>
    <property type="match status" value="1"/>
</dbReference>
<dbReference type="PROSITE" id="PS50038">
    <property type="entry name" value="FZ"/>
    <property type="match status" value="1"/>
</dbReference>
<dbReference type="PROSITE" id="PS50261">
    <property type="entry name" value="G_PROTEIN_RECEP_F2_4"/>
    <property type="match status" value="1"/>
</dbReference>
<organism>
    <name type="scientific">Drosophila melanogaster</name>
    <name type="common">Fruit fly</name>
    <dbReference type="NCBI Taxonomy" id="7227"/>
    <lineage>
        <taxon>Eukaryota</taxon>
        <taxon>Metazoa</taxon>
        <taxon>Ecdysozoa</taxon>
        <taxon>Arthropoda</taxon>
        <taxon>Hexapoda</taxon>
        <taxon>Insecta</taxon>
        <taxon>Pterygota</taxon>
        <taxon>Neoptera</taxon>
        <taxon>Endopterygota</taxon>
        <taxon>Diptera</taxon>
        <taxon>Brachycera</taxon>
        <taxon>Muscomorpha</taxon>
        <taxon>Ephydroidea</taxon>
        <taxon>Drosophilidae</taxon>
        <taxon>Drosophila</taxon>
        <taxon>Sophophora</taxon>
    </lineage>
</organism>
<keyword id="KW-1003">Cell membrane</keyword>
<keyword id="KW-0217">Developmental protein</keyword>
<keyword id="KW-1015">Disulfide bond</keyword>
<keyword id="KW-0297">G-protein coupled receptor</keyword>
<keyword id="KW-0325">Glycoprotein</keyword>
<keyword id="KW-0472">Membrane</keyword>
<keyword id="KW-0675">Receptor</keyword>
<keyword id="KW-1185">Reference proteome</keyword>
<keyword id="KW-0732">Signal</keyword>
<keyword id="KW-0807">Transducer</keyword>
<keyword id="KW-0812">Transmembrane</keyword>
<keyword id="KW-1133">Transmembrane helix</keyword>
<keyword id="KW-0879">Wnt signaling pathway</keyword>
<evidence type="ECO:0000250" key="1"/>
<evidence type="ECO:0000255" key="2"/>
<evidence type="ECO:0000255" key="3">
    <source>
        <dbReference type="PROSITE-ProRule" id="PRU00090"/>
    </source>
</evidence>
<evidence type="ECO:0000269" key="4">
    <source>
    </source>
</evidence>
<evidence type="ECO:0000269" key="5">
    <source>
    </source>
</evidence>
<evidence type="ECO:0000305" key="6"/>
<evidence type="ECO:0000305" key="7">
    <source>
    </source>
</evidence>
<proteinExistence type="evidence at protein level"/>
<name>FRIZ_DROME</name>